<feature type="chain" id="PRO_0000128532" description="Large ribosomal subunit protein uL14">
    <location>
        <begin position="1"/>
        <end position="122"/>
    </location>
</feature>
<gene>
    <name evidence="1" type="primary">rplN</name>
    <name type="ordered locus">BU514</name>
</gene>
<dbReference type="EMBL" id="BA000003">
    <property type="protein sequence ID" value="BAB13207.1"/>
    <property type="molecule type" value="Genomic_DNA"/>
</dbReference>
<dbReference type="RefSeq" id="NP_240321.1">
    <property type="nucleotide sequence ID" value="NC_002528.1"/>
</dbReference>
<dbReference type="RefSeq" id="WP_009874465.1">
    <property type="nucleotide sequence ID" value="NZ_AP036055.1"/>
</dbReference>
<dbReference type="SMR" id="P57581"/>
<dbReference type="STRING" id="563178.BUAP5A_507"/>
<dbReference type="EnsemblBacteria" id="BAB13207">
    <property type="protein sequence ID" value="BAB13207"/>
    <property type="gene ID" value="BAB13207"/>
</dbReference>
<dbReference type="KEGG" id="buc:BU514"/>
<dbReference type="PATRIC" id="fig|107806.10.peg.519"/>
<dbReference type="eggNOG" id="COG0093">
    <property type="taxonomic scope" value="Bacteria"/>
</dbReference>
<dbReference type="HOGENOM" id="CLU_095071_2_1_6"/>
<dbReference type="Proteomes" id="UP000001806">
    <property type="component" value="Chromosome"/>
</dbReference>
<dbReference type="GO" id="GO:0022625">
    <property type="term" value="C:cytosolic large ribosomal subunit"/>
    <property type="evidence" value="ECO:0007669"/>
    <property type="project" value="TreeGrafter"/>
</dbReference>
<dbReference type="GO" id="GO:0070180">
    <property type="term" value="F:large ribosomal subunit rRNA binding"/>
    <property type="evidence" value="ECO:0007669"/>
    <property type="project" value="TreeGrafter"/>
</dbReference>
<dbReference type="GO" id="GO:0003735">
    <property type="term" value="F:structural constituent of ribosome"/>
    <property type="evidence" value="ECO:0007669"/>
    <property type="project" value="InterPro"/>
</dbReference>
<dbReference type="GO" id="GO:0006412">
    <property type="term" value="P:translation"/>
    <property type="evidence" value="ECO:0007669"/>
    <property type="project" value="UniProtKB-UniRule"/>
</dbReference>
<dbReference type="CDD" id="cd00337">
    <property type="entry name" value="Ribosomal_uL14"/>
    <property type="match status" value="1"/>
</dbReference>
<dbReference type="FunFam" id="2.40.150.20:FF:000001">
    <property type="entry name" value="50S ribosomal protein L14"/>
    <property type="match status" value="1"/>
</dbReference>
<dbReference type="Gene3D" id="2.40.150.20">
    <property type="entry name" value="Ribosomal protein L14"/>
    <property type="match status" value="1"/>
</dbReference>
<dbReference type="HAMAP" id="MF_01367">
    <property type="entry name" value="Ribosomal_uL14"/>
    <property type="match status" value="1"/>
</dbReference>
<dbReference type="InterPro" id="IPR000218">
    <property type="entry name" value="Ribosomal_uL14"/>
</dbReference>
<dbReference type="InterPro" id="IPR005745">
    <property type="entry name" value="Ribosomal_uL14_bac-type"/>
</dbReference>
<dbReference type="InterPro" id="IPR019972">
    <property type="entry name" value="Ribosomal_uL14_CS"/>
</dbReference>
<dbReference type="InterPro" id="IPR036853">
    <property type="entry name" value="Ribosomal_uL14_sf"/>
</dbReference>
<dbReference type="NCBIfam" id="TIGR01067">
    <property type="entry name" value="rplN_bact"/>
    <property type="match status" value="1"/>
</dbReference>
<dbReference type="PANTHER" id="PTHR11761">
    <property type="entry name" value="50S/60S RIBOSOMAL PROTEIN L14/L23"/>
    <property type="match status" value="1"/>
</dbReference>
<dbReference type="PANTHER" id="PTHR11761:SF3">
    <property type="entry name" value="LARGE RIBOSOMAL SUBUNIT PROTEIN UL14M"/>
    <property type="match status" value="1"/>
</dbReference>
<dbReference type="Pfam" id="PF00238">
    <property type="entry name" value="Ribosomal_L14"/>
    <property type="match status" value="1"/>
</dbReference>
<dbReference type="SMART" id="SM01374">
    <property type="entry name" value="Ribosomal_L14"/>
    <property type="match status" value="1"/>
</dbReference>
<dbReference type="SUPFAM" id="SSF50193">
    <property type="entry name" value="Ribosomal protein L14"/>
    <property type="match status" value="1"/>
</dbReference>
<dbReference type="PROSITE" id="PS00049">
    <property type="entry name" value="RIBOSOMAL_L14"/>
    <property type="match status" value="1"/>
</dbReference>
<organism>
    <name type="scientific">Buchnera aphidicola subsp. Acyrthosiphon pisum (strain APS)</name>
    <name type="common">Acyrthosiphon pisum symbiotic bacterium</name>
    <dbReference type="NCBI Taxonomy" id="107806"/>
    <lineage>
        <taxon>Bacteria</taxon>
        <taxon>Pseudomonadati</taxon>
        <taxon>Pseudomonadota</taxon>
        <taxon>Gammaproteobacteria</taxon>
        <taxon>Enterobacterales</taxon>
        <taxon>Erwiniaceae</taxon>
        <taxon>Buchnera</taxon>
    </lineage>
</organism>
<proteinExistence type="inferred from homology"/>
<reference key="1">
    <citation type="journal article" date="2000" name="Nature">
        <title>Genome sequence of the endocellular bacterial symbiont of aphids Buchnera sp. APS.</title>
        <authorList>
            <person name="Shigenobu S."/>
            <person name="Watanabe H."/>
            <person name="Hattori M."/>
            <person name="Sakaki Y."/>
            <person name="Ishikawa H."/>
        </authorList>
    </citation>
    <scope>NUCLEOTIDE SEQUENCE [LARGE SCALE GENOMIC DNA]</scope>
    <source>
        <strain>APS</strain>
    </source>
</reference>
<evidence type="ECO:0000255" key="1">
    <source>
        <dbReference type="HAMAP-Rule" id="MF_01367"/>
    </source>
</evidence>
<evidence type="ECO:0000305" key="2"/>
<protein>
    <recommendedName>
        <fullName evidence="1">Large ribosomal subunit protein uL14</fullName>
    </recommendedName>
    <alternativeName>
        <fullName evidence="2">50S ribosomal protein L14</fullName>
    </alternativeName>
</protein>
<keyword id="KW-1185">Reference proteome</keyword>
<keyword id="KW-0687">Ribonucleoprotein</keyword>
<keyword id="KW-0689">Ribosomal protein</keyword>
<keyword id="KW-0694">RNA-binding</keyword>
<keyword id="KW-0699">rRNA-binding</keyword>
<accession>P57581</accession>
<sequence>MIQEQTILHVADNSGARSAMCIKVLGGSRRRYAAIGDVIKITIKEAIPRGKVKKGEVLKAVVVRTKKGVRRSDGSVIRFDTNACVVLNNNEQPIGTRIFGPVTRELRTEKFMKIISLAPEVL</sequence>
<name>RL14_BUCAI</name>
<comment type="function">
    <text evidence="1">Binds to 23S rRNA. Forms part of two intersubunit bridges in the 70S ribosome.</text>
</comment>
<comment type="subunit">
    <text evidence="1">Part of the 50S ribosomal subunit. Forms a cluster with proteins L3 and L19. In the 70S ribosome, L14 and L19 interact and together make contacts with the 16S rRNA in bridges B5 and B8.</text>
</comment>
<comment type="similarity">
    <text evidence="1">Belongs to the universal ribosomal protein uL14 family.</text>
</comment>